<sequence length="277" mass="30837">MAMLSFEKKYRVRGGTLIGGDLFDFWVGPFYVGIFGVMTVFFALIGIALIAWNTALGPTWNLWQISVNPPDAKYGLGFAPLAEGGIWQWVSICATGAFVTWALREVEICRKLGIGFHVPFAFSFAIFAYVTLVVIRPVLMGSWSYGFPYGIFTHLDWVSNTGYSYGQFHYNPAHMIAITFFFTTCLALALHGGLVLSALNPDRGEPVKSPEHENTVFRDLVGYSIGTIGIHRLGLFLALSAVFFSAVCMIISGPVLAEGGSWPDWWNWWRNLPIWNP</sequence>
<comment type="function">
    <text>The reaction center is a membrane-bound complex that mediates the initial photochemical event in the electron transfer process of photosynthesis.</text>
</comment>
<comment type="subunit">
    <text>Reaction center is composed of four bacteriochlorophylls, two bacteriopheophytins, two ubiquinones, one iron, and three highly hydrophobic polypeptide chains (designated L, M, and H).</text>
</comment>
<comment type="subcellular location">
    <subcellularLocation>
        <location evidence="1">Cellular chromatophore membrane</location>
        <topology evidence="1">Multi-pass membrane protein</topology>
    </subcellularLocation>
</comment>
<comment type="similarity">
    <text evidence="3">Belongs to the reaction center PufL/M/PsbA/D family.</text>
</comment>
<protein>
    <recommendedName>
        <fullName>Reaction center protein L chain</fullName>
    </recommendedName>
    <alternativeName>
        <fullName>Photosynthetic reaction center L subunit</fullName>
    </alternativeName>
</protein>
<dbReference type="EMBL" id="AB015977">
    <property type="protein sequence ID" value="BAA33001.1"/>
    <property type="molecule type" value="mRNA"/>
</dbReference>
<dbReference type="EMBL" id="BX572597">
    <property type="protein sequence ID" value="CAE26969.1"/>
    <property type="molecule type" value="Genomic_DNA"/>
</dbReference>
<dbReference type="RefSeq" id="WP_011157088.1">
    <property type="nucleotide sequence ID" value="NZ_CP116810.1"/>
</dbReference>
<dbReference type="PDB" id="6Z5R">
    <property type="method" value="EM"/>
    <property type="resolution" value="2.80 A"/>
    <property type="chains" value="L=1-277"/>
</dbReference>
<dbReference type="PDB" id="6Z5S">
    <property type="method" value="EM"/>
    <property type="resolution" value="2.65 A"/>
    <property type="chains" value="L=1-277"/>
</dbReference>
<dbReference type="PDBsum" id="6Z5R"/>
<dbReference type="PDBsum" id="6Z5S"/>
<dbReference type="EMDB" id="EMD-11080"/>
<dbReference type="EMDB" id="EMD-11081"/>
<dbReference type="SMR" id="O83005"/>
<dbReference type="STRING" id="258594.RPA1527"/>
<dbReference type="GeneID" id="66892558"/>
<dbReference type="eggNOG" id="ENOG502Z7K3">
    <property type="taxonomic scope" value="Bacteria"/>
</dbReference>
<dbReference type="HOGENOM" id="CLU_078782_0_0_5"/>
<dbReference type="PhylomeDB" id="O83005"/>
<dbReference type="GO" id="GO:0030077">
    <property type="term" value="C:plasma membrane light-harvesting complex"/>
    <property type="evidence" value="ECO:0007669"/>
    <property type="project" value="InterPro"/>
</dbReference>
<dbReference type="GO" id="GO:0042717">
    <property type="term" value="C:plasma membrane-derived chromatophore membrane"/>
    <property type="evidence" value="ECO:0007669"/>
    <property type="project" value="UniProtKB-SubCell"/>
</dbReference>
<dbReference type="GO" id="GO:0042314">
    <property type="term" value="F:bacteriochlorophyll binding"/>
    <property type="evidence" value="ECO:0007669"/>
    <property type="project" value="UniProtKB-KW"/>
</dbReference>
<dbReference type="GO" id="GO:0045156">
    <property type="term" value="F:electron transporter, transferring electrons within the cyclic electron transport pathway of photosynthesis activity"/>
    <property type="evidence" value="ECO:0007669"/>
    <property type="project" value="InterPro"/>
</dbReference>
<dbReference type="GO" id="GO:0046872">
    <property type="term" value="F:metal ion binding"/>
    <property type="evidence" value="ECO:0007669"/>
    <property type="project" value="UniProtKB-KW"/>
</dbReference>
<dbReference type="GO" id="GO:0009772">
    <property type="term" value="P:photosynthetic electron transport in photosystem II"/>
    <property type="evidence" value="ECO:0007669"/>
    <property type="project" value="InterPro"/>
</dbReference>
<dbReference type="CDD" id="cd09290">
    <property type="entry name" value="Photo-RC_L"/>
    <property type="match status" value="1"/>
</dbReference>
<dbReference type="Gene3D" id="1.20.85.10">
    <property type="entry name" value="Photosystem II protein D1-like"/>
    <property type="match status" value="2"/>
</dbReference>
<dbReference type="InterPro" id="IPR036854">
    <property type="entry name" value="Photo_II_D1/D2_sf"/>
</dbReference>
<dbReference type="InterPro" id="IPR005871">
    <property type="entry name" value="Photo_RC_L"/>
</dbReference>
<dbReference type="InterPro" id="IPR000484">
    <property type="entry name" value="Photo_RC_L/M"/>
</dbReference>
<dbReference type="InterPro" id="IPR055265">
    <property type="entry name" value="Photo_RC_L/M_CS"/>
</dbReference>
<dbReference type="NCBIfam" id="TIGR01157">
    <property type="entry name" value="pufL"/>
    <property type="match status" value="1"/>
</dbReference>
<dbReference type="Pfam" id="PF00124">
    <property type="entry name" value="Photo_RC"/>
    <property type="match status" value="1"/>
</dbReference>
<dbReference type="PRINTS" id="PR00256">
    <property type="entry name" value="REACTNCENTRE"/>
</dbReference>
<dbReference type="SUPFAM" id="SSF81483">
    <property type="entry name" value="Bacterial photosystem II reaction centre, L and M subunits"/>
    <property type="match status" value="1"/>
</dbReference>
<dbReference type="PROSITE" id="PS00244">
    <property type="entry name" value="REACTION_CENTER"/>
    <property type="match status" value="1"/>
</dbReference>
<proteinExistence type="evidence at protein level"/>
<evidence type="ECO:0000250" key="1"/>
<evidence type="ECO:0000255" key="2"/>
<evidence type="ECO:0000305" key="3"/>
<evidence type="ECO:0007829" key="4">
    <source>
        <dbReference type="PDB" id="6Z5S"/>
    </source>
</evidence>
<reference key="1">
    <citation type="submission" date="1998-07" db="EMBL/GenBank/DDBJ databases">
        <title>Use of gyrB gene, pufL and pufM genes and 16S rRNA sequence analysis to investigate phylogeny of photosynthetic bacteria.</title>
        <authorList>
            <person name="Hamada T."/>
        </authorList>
    </citation>
    <scope>NUCLEOTIDE SEQUENCE [GENOMIC DNA]</scope>
    <source>
        <strain>HMD002</strain>
    </source>
</reference>
<reference key="2">
    <citation type="journal article" date="2004" name="Nat. Biotechnol.">
        <title>Complete genome sequence of the metabolically versatile photosynthetic bacterium Rhodopseudomonas palustris.</title>
        <authorList>
            <person name="Larimer F.W."/>
            <person name="Chain P."/>
            <person name="Hauser L."/>
            <person name="Lamerdin J.E."/>
            <person name="Malfatti S."/>
            <person name="Do L."/>
            <person name="Land M.L."/>
            <person name="Pelletier D.A."/>
            <person name="Beatty J.T."/>
            <person name="Lang A.S."/>
            <person name="Tabita F.R."/>
            <person name="Gibson J.L."/>
            <person name="Hanson T.E."/>
            <person name="Bobst C."/>
            <person name="Torres y Torres J.L."/>
            <person name="Peres C."/>
            <person name="Harrison F.H."/>
            <person name="Gibson J."/>
            <person name="Harwood C.S."/>
        </authorList>
    </citation>
    <scope>NUCLEOTIDE SEQUENCE [LARGE SCALE GENOMIC DNA]</scope>
    <source>
        <strain>ATCC BAA-98 / CGA009</strain>
    </source>
</reference>
<keyword id="KW-0002">3D-structure</keyword>
<keyword id="KW-0076">Bacteriochlorophyll</keyword>
<keyword id="KW-0148">Chlorophyll</keyword>
<keyword id="KW-0157">Chromophore</keyword>
<keyword id="KW-0249">Electron transport</keyword>
<keyword id="KW-0408">Iron</keyword>
<keyword id="KW-0460">Magnesium</keyword>
<keyword id="KW-0472">Membrane</keyword>
<keyword id="KW-0479">Metal-binding</keyword>
<keyword id="KW-0602">Photosynthesis</keyword>
<keyword id="KW-0674">Reaction center</keyword>
<keyword id="KW-0812">Transmembrane</keyword>
<keyword id="KW-1133">Transmembrane helix</keyword>
<keyword id="KW-0813">Transport</keyword>
<gene>
    <name type="primary">pufL</name>
    <name type="ordered locus">RPA1527</name>
</gene>
<organism>
    <name type="scientific">Rhodopseudomonas palustris (strain ATCC BAA-98 / CGA009)</name>
    <dbReference type="NCBI Taxonomy" id="258594"/>
    <lineage>
        <taxon>Bacteria</taxon>
        <taxon>Pseudomonadati</taxon>
        <taxon>Pseudomonadota</taxon>
        <taxon>Alphaproteobacteria</taxon>
        <taxon>Hyphomicrobiales</taxon>
        <taxon>Nitrobacteraceae</taxon>
        <taxon>Rhodopseudomonas</taxon>
    </lineage>
</organism>
<name>RCEL_RHOPA</name>
<accession>O83005</accession>
<feature type="initiator methionine" description="Removed" evidence="1">
    <location>
        <position position="1"/>
    </location>
</feature>
<feature type="chain" id="PRO_0000090405" description="Reaction center protein L chain">
    <location>
        <begin position="2"/>
        <end position="277"/>
    </location>
</feature>
<feature type="transmembrane region" description="Helical" evidence="2">
    <location>
        <begin position="30"/>
        <end position="52"/>
    </location>
</feature>
<feature type="transmembrane region" description="Helical" evidence="2">
    <location>
        <begin position="84"/>
        <end position="106"/>
    </location>
</feature>
<feature type="transmembrane region" description="Helical" evidence="2">
    <location>
        <begin position="113"/>
        <end position="135"/>
    </location>
</feature>
<feature type="transmembrane region" description="Helical" evidence="2">
    <location>
        <begin position="173"/>
        <end position="195"/>
    </location>
</feature>
<feature type="transmembrane region" description="Helical" evidence="2">
    <location>
        <begin position="233"/>
        <end position="255"/>
    </location>
</feature>
<feature type="binding site" description="axial binding residue" evidence="1">
    <location>
        <position position="154"/>
    </location>
    <ligand>
        <name>(7R,8Z)-bacteriochlorophyll b</name>
        <dbReference type="ChEBI" id="CHEBI:30034"/>
    </ligand>
    <ligandPart>
        <name>Mg</name>
        <dbReference type="ChEBI" id="CHEBI:25107"/>
    </ligandPart>
</feature>
<feature type="binding site" description="axial binding residue" evidence="1">
    <location>
        <position position="174"/>
    </location>
    <ligand>
        <name>(7R,8Z)-bacteriochlorophyll b</name>
        <dbReference type="ChEBI" id="CHEBI:30034"/>
    </ligand>
    <ligandPart>
        <name>Mg</name>
        <dbReference type="ChEBI" id="CHEBI:25107"/>
    </ligandPart>
</feature>
<feature type="binding site" evidence="1">
    <location>
        <position position="191"/>
    </location>
    <ligand>
        <name>Fe cation</name>
        <dbReference type="ChEBI" id="CHEBI:24875"/>
    </ligand>
</feature>
<feature type="binding site" evidence="1">
    <location>
        <position position="217"/>
    </location>
    <ligand>
        <name>a ubiquinone</name>
        <dbReference type="ChEBI" id="CHEBI:16389"/>
    </ligand>
</feature>
<feature type="binding site" evidence="1">
    <location>
        <position position="231"/>
    </location>
    <ligand>
        <name>Fe cation</name>
        <dbReference type="ChEBI" id="CHEBI:24875"/>
    </ligand>
</feature>
<feature type="sequence conflict" description="In Ref. 1; BAA33001." evidence="3" ref="1">
    <original>I</original>
    <variation>F</variation>
    <location>
        <position position="34"/>
    </location>
</feature>
<feature type="sequence conflict" description="In Ref. 1; BAA33001." evidence="3" ref="1">
    <original>MT</original>
    <variation>TA</variation>
    <location>
        <begin position="38"/>
        <end position="39"/>
    </location>
</feature>
<feature type="sequence conflict" description="In Ref. 1; BAA33001." evidence="3" ref="1">
    <original>F</original>
    <variation>C</variation>
    <location>
        <position position="42"/>
    </location>
</feature>
<feature type="sequence conflict" description="In Ref. 1; BAA33001." evidence="3" ref="1">
    <original>IGI</original>
    <variation>MGT</variation>
    <location>
        <begin position="45"/>
        <end position="47"/>
    </location>
</feature>
<feature type="sequence conflict" description="In Ref. 1; BAA33001." evidence="3" ref="1">
    <original>A</original>
    <variation>I</variation>
    <location>
        <position position="51"/>
    </location>
</feature>
<feature type="sequence conflict" description="In Ref. 1; BAA33001." evidence="3" ref="1">
    <original>SIC</original>
    <variation>TIF</variation>
    <location>
        <begin position="91"/>
        <end position="93"/>
    </location>
</feature>
<feature type="sequence conflict" description="In Ref. 1; BAA33001." evidence="3" ref="1">
    <original>VT</original>
    <variation>CS</variation>
    <location>
        <begin position="99"/>
        <end position="100"/>
    </location>
</feature>
<feature type="sequence conflict" description="In Ref. 1; BAA33001." evidence="3" ref="1">
    <original>F</original>
    <variation>Y</variation>
    <location>
        <position position="116"/>
    </location>
</feature>
<feature type="sequence conflict" description="In Ref. 1; BAA33001." evidence="3" ref="1">
    <original>V</original>
    <variation>L</variation>
    <location>
        <position position="130"/>
    </location>
</feature>
<feature type="sequence conflict" description="In Ref. 1; BAA33001." evidence="3" ref="1">
    <original>S</original>
    <variation>Q</variation>
    <location>
        <position position="164"/>
    </location>
</feature>
<feature type="sequence conflict" description="In Ref. 1; BAA33001." evidence="3" ref="1">
    <original>Y</original>
    <variation>W</variation>
    <location>
        <position position="170"/>
    </location>
</feature>
<feature type="sequence conflict" description="In Ref. 1; BAA33001." evidence="3" ref="1">
    <original>A</original>
    <variation>G</variation>
    <location>
        <position position="173"/>
    </location>
</feature>
<feature type="sequence conflict" description="In Ref. 1; BAA33001." evidence="3" ref="1">
    <original>L</original>
    <variation>I</variation>
    <location>
        <position position="199"/>
    </location>
</feature>
<feature type="sequence conflict" description="In Ref. 1; BAA33001." evidence="3" ref="1">
    <original>L</original>
    <variation>V</variation>
    <location>
        <position position="233"/>
    </location>
</feature>
<feature type="sequence conflict" description="In Ref. 1; BAA33001." evidence="3" ref="1">
    <original>F</original>
    <variation>W</variation>
    <location>
        <position position="244"/>
    </location>
</feature>
<feature type="sequence conflict" description="In Ref. 1; BAA33001." evidence="3" ref="1">
    <original>I</original>
    <variation>L</variation>
    <location>
        <position position="250"/>
    </location>
</feature>
<feature type="sequence conflict" description="In Ref. 1; BAA33001." evidence="3" ref="1">
    <original>A</original>
    <variation>P</variation>
    <location>
        <position position="257"/>
    </location>
</feature>
<feature type="sequence conflict" description="In Ref. 1; BAA33001." evidence="3" ref="1">
    <original>D</original>
    <variation>E</variation>
    <location>
        <position position="264"/>
    </location>
</feature>
<feature type="sequence conflict" description="In Ref. 1; BAA33001." evidence="3" ref="1">
    <original>N</original>
    <variation>E</variation>
    <location>
        <position position="267"/>
    </location>
</feature>
<feature type="sequence conflict" description="In Ref. 1; BAA33001." evidence="3" ref="1">
    <original>NL</original>
    <variation>RI</variation>
    <location>
        <begin position="271"/>
        <end position="272"/>
    </location>
</feature>
<feature type="helix" evidence="4">
    <location>
        <begin position="7"/>
        <end position="9"/>
    </location>
</feature>
<feature type="strand" evidence="4">
    <location>
        <begin position="17"/>
        <end position="19"/>
    </location>
</feature>
<feature type="helix" evidence="4">
    <location>
        <begin position="33"/>
        <end position="56"/>
    </location>
</feature>
<feature type="turn" evidence="4">
    <location>
        <begin position="62"/>
        <end position="64"/>
    </location>
</feature>
<feature type="helix" evidence="4">
    <location>
        <begin position="72"/>
        <end position="74"/>
    </location>
</feature>
<feature type="helix" evidence="4">
    <location>
        <begin position="81"/>
        <end position="83"/>
    </location>
</feature>
<feature type="helix" evidence="4">
    <location>
        <begin position="85"/>
        <end position="112"/>
    </location>
</feature>
<feature type="helix" evidence="4">
    <location>
        <begin position="117"/>
        <end position="133"/>
    </location>
</feature>
<feature type="helix" evidence="4">
    <location>
        <begin position="135"/>
        <end position="140"/>
    </location>
</feature>
<feature type="helix" evidence="4">
    <location>
        <begin position="143"/>
        <end position="145"/>
    </location>
</feature>
<feature type="helix" evidence="4">
    <location>
        <begin position="153"/>
        <end position="163"/>
    </location>
</feature>
<feature type="helix" evidence="4">
    <location>
        <begin position="168"/>
        <end position="170"/>
    </location>
</feature>
<feature type="helix" evidence="4">
    <location>
        <begin position="172"/>
        <end position="199"/>
    </location>
</feature>
<feature type="helix" evidence="4">
    <location>
        <begin position="210"/>
        <end position="221"/>
    </location>
</feature>
<feature type="helix" evidence="4">
    <location>
        <begin position="226"/>
        <end position="250"/>
    </location>
</feature>
<feature type="turn" evidence="4">
    <location>
        <begin position="253"/>
        <end position="255"/>
    </location>
</feature>
<feature type="helix" evidence="4">
    <location>
        <begin position="262"/>
        <end position="265"/>
    </location>
</feature>
<feature type="helix" evidence="4">
    <location>
        <begin position="267"/>
        <end position="270"/>
    </location>
</feature>
<feature type="turn" evidence="4">
    <location>
        <begin position="273"/>
        <end position="275"/>
    </location>
</feature>